<dbReference type="EC" id="6.3.2.4" evidence="2"/>
<dbReference type="EMBL" id="AE014075">
    <property type="protein sequence ID" value="AAN78965.1"/>
    <property type="molecule type" value="Genomic_DNA"/>
</dbReference>
<dbReference type="RefSeq" id="WP_000413685.1">
    <property type="nucleotide sequence ID" value="NZ_CP051263.1"/>
</dbReference>
<dbReference type="SMR" id="Q8FKE3"/>
<dbReference type="STRING" id="199310.c0487"/>
<dbReference type="KEGG" id="ecc:c0487"/>
<dbReference type="eggNOG" id="COG1181">
    <property type="taxonomic scope" value="Bacteria"/>
</dbReference>
<dbReference type="HOGENOM" id="CLU_039268_0_1_6"/>
<dbReference type="BioCyc" id="ECOL199310:C0487-MONOMER"/>
<dbReference type="UniPathway" id="UPA00219"/>
<dbReference type="Proteomes" id="UP000001410">
    <property type="component" value="Chromosome"/>
</dbReference>
<dbReference type="GO" id="GO:0005829">
    <property type="term" value="C:cytosol"/>
    <property type="evidence" value="ECO:0007669"/>
    <property type="project" value="TreeGrafter"/>
</dbReference>
<dbReference type="GO" id="GO:0005524">
    <property type="term" value="F:ATP binding"/>
    <property type="evidence" value="ECO:0007669"/>
    <property type="project" value="UniProtKB-KW"/>
</dbReference>
<dbReference type="GO" id="GO:0008716">
    <property type="term" value="F:D-alanine-D-alanine ligase activity"/>
    <property type="evidence" value="ECO:0007669"/>
    <property type="project" value="UniProtKB-UniRule"/>
</dbReference>
<dbReference type="GO" id="GO:0046872">
    <property type="term" value="F:metal ion binding"/>
    <property type="evidence" value="ECO:0007669"/>
    <property type="project" value="UniProtKB-KW"/>
</dbReference>
<dbReference type="GO" id="GO:0071555">
    <property type="term" value="P:cell wall organization"/>
    <property type="evidence" value="ECO:0007669"/>
    <property type="project" value="UniProtKB-KW"/>
</dbReference>
<dbReference type="GO" id="GO:0009252">
    <property type="term" value="P:peptidoglycan biosynthetic process"/>
    <property type="evidence" value="ECO:0007669"/>
    <property type="project" value="UniProtKB-UniRule"/>
</dbReference>
<dbReference type="GO" id="GO:0008360">
    <property type="term" value="P:regulation of cell shape"/>
    <property type="evidence" value="ECO:0007669"/>
    <property type="project" value="UniProtKB-KW"/>
</dbReference>
<dbReference type="FunFam" id="3.30.1490.20:FF:000007">
    <property type="entry name" value="D-alanine--D-alanine ligase"/>
    <property type="match status" value="1"/>
</dbReference>
<dbReference type="FunFam" id="3.30.470.20:FF:000008">
    <property type="entry name" value="D-alanine--D-alanine ligase"/>
    <property type="match status" value="1"/>
</dbReference>
<dbReference type="FunFam" id="3.40.50.20:FF:000015">
    <property type="entry name" value="D-alanine--D-alanine ligase"/>
    <property type="match status" value="1"/>
</dbReference>
<dbReference type="Gene3D" id="3.40.50.20">
    <property type="match status" value="1"/>
</dbReference>
<dbReference type="Gene3D" id="3.30.1490.20">
    <property type="entry name" value="ATP-grasp fold, A domain"/>
    <property type="match status" value="1"/>
</dbReference>
<dbReference type="Gene3D" id="3.30.470.20">
    <property type="entry name" value="ATP-grasp fold, B domain"/>
    <property type="match status" value="1"/>
</dbReference>
<dbReference type="HAMAP" id="MF_00047">
    <property type="entry name" value="Dala_Dala_lig"/>
    <property type="match status" value="1"/>
</dbReference>
<dbReference type="InterPro" id="IPR011761">
    <property type="entry name" value="ATP-grasp"/>
</dbReference>
<dbReference type="InterPro" id="IPR013815">
    <property type="entry name" value="ATP_grasp_subdomain_1"/>
</dbReference>
<dbReference type="InterPro" id="IPR000291">
    <property type="entry name" value="D-Ala_lig_Van_CS"/>
</dbReference>
<dbReference type="InterPro" id="IPR005905">
    <property type="entry name" value="D_ala_D_ala"/>
</dbReference>
<dbReference type="InterPro" id="IPR011095">
    <property type="entry name" value="Dala_Dala_lig_C"/>
</dbReference>
<dbReference type="InterPro" id="IPR011127">
    <property type="entry name" value="Dala_Dala_lig_N"/>
</dbReference>
<dbReference type="InterPro" id="IPR016185">
    <property type="entry name" value="PreATP-grasp_dom_sf"/>
</dbReference>
<dbReference type="NCBIfam" id="TIGR01205">
    <property type="entry name" value="D_ala_D_alaTIGR"/>
    <property type="match status" value="1"/>
</dbReference>
<dbReference type="NCBIfam" id="NF002378">
    <property type="entry name" value="PRK01372.1"/>
    <property type="match status" value="1"/>
</dbReference>
<dbReference type="NCBIfam" id="NF002525">
    <property type="entry name" value="PRK01966.1-1"/>
    <property type="match status" value="1"/>
</dbReference>
<dbReference type="NCBIfam" id="NF002528">
    <property type="entry name" value="PRK01966.1-4"/>
    <property type="match status" value="1"/>
</dbReference>
<dbReference type="PANTHER" id="PTHR23132">
    <property type="entry name" value="D-ALANINE--D-ALANINE LIGASE"/>
    <property type="match status" value="1"/>
</dbReference>
<dbReference type="PANTHER" id="PTHR23132:SF25">
    <property type="entry name" value="D-ALANINE--D-ALANINE LIGASE A"/>
    <property type="match status" value="1"/>
</dbReference>
<dbReference type="Pfam" id="PF07478">
    <property type="entry name" value="Dala_Dala_lig_C"/>
    <property type="match status" value="1"/>
</dbReference>
<dbReference type="Pfam" id="PF01820">
    <property type="entry name" value="Dala_Dala_lig_N"/>
    <property type="match status" value="1"/>
</dbReference>
<dbReference type="PIRSF" id="PIRSF039102">
    <property type="entry name" value="Ddl/VanB"/>
    <property type="match status" value="1"/>
</dbReference>
<dbReference type="SUPFAM" id="SSF56059">
    <property type="entry name" value="Glutathione synthetase ATP-binding domain-like"/>
    <property type="match status" value="1"/>
</dbReference>
<dbReference type="SUPFAM" id="SSF52440">
    <property type="entry name" value="PreATP-grasp domain"/>
    <property type="match status" value="1"/>
</dbReference>
<dbReference type="PROSITE" id="PS50975">
    <property type="entry name" value="ATP_GRASP"/>
    <property type="match status" value="1"/>
</dbReference>
<dbReference type="PROSITE" id="PS00843">
    <property type="entry name" value="DALA_DALA_LIGASE_1"/>
    <property type="match status" value="1"/>
</dbReference>
<dbReference type="PROSITE" id="PS00844">
    <property type="entry name" value="DALA_DALA_LIGASE_2"/>
    <property type="match status" value="1"/>
</dbReference>
<reference key="1">
    <citation type="journal article" date="2002" name="Proc. Natl. Acad. Sci. U.S.A.">
        <title>Extensive mosaic structure revealed by the complete genome sequence of uropathogenic Escherichia coli.</title>
        <authorList>
            <person name="Welch R.A."/>
            <person name="Burland V."/>
            <person name="Plunkett G. III"/>
            <person name="Redford P."/>
            <person name="Roesch P."/>
            <person name="Rasko D."/>
            <person name="Buckles E.L."/>
            <person name="Liou S.-R."/>
            <person name="Boutin A."/>
            <person name="Hackett J."/>
            <person name="Stroud D."/>
            <person name="Mayhew G.F."/>
            <person name="Rose D.J."/>
            <person name="Zhou S."/>
            <person name="Schwartz D.C."/>
            <person name="Perna N.T."/>
            <person name="Mobley H.L.T."/>
            <person name="Donnenberg M.S."/>
            <person name="Blattner F.R."/>
        </authorList>
    </citation>
    <scope>NUCLEOTIDE SEQUENCE [LARGE SCALE GENOMIC DNA]</scope>
    <source>
        <strain>CFT073 / ATCC 700928 / UPEC</strain>
    </source>
</reference>
<feature type="chain" id="PRO_0000177817" description="D-alanine--D-alanine ligase A">
    <location>
        <begin position="1"/>
        <end position="364"/>
    </location>
</feature>
<feature type="domain" description="ATP-grasp" evidence="2">
    <location>
        <begin position="145"/>
        <end position="348"/>
    </location>
</feature>
<feature type="binding site" evidence="2">
    <location>
        <begin position="175"/>
        <end position="230"/>
    </location>
    <ligand>
        <name>ATP</name>
        <dbReference type="ChEBI" id="CHEBI:30616"/>
    </ligand>
</feature>
<feature type="binding site" evidence="2">
    <location>
        <position position="302"/>
    </location>
    <ligand>
        <name>Mg(2+)</name>
        <dbReference type="ChEBI" id="CHEBI:18420"/>
        <label>1</label>
    </ligand>
</feature>
<feature type="binding site" evidence="2">
    <location>
        <position position="315"/>
    </location>
    <ligand>
        <name>Mg(2+)</name>
        <dbReference type="ChEBI" id="CHEBI:18420"/>
        <label>1</label>
    </ligand>
</feature>
<feature type="binding site" evidence="2">
    <location>
        <position position="315"/>
    </location>
    <ligand>
        <name>Mg(2+)</name>
        <dbReference type="ChEBI" id="CHEBI:18420"/>
        <label>2</label>
    </ligand>
</feature>
<feature type="binding site" evidence="2">
    <location>
        <position position="317"/>
    </location>
    <ligand>
        <name>Mg(2+)</name>
        <dbReference type="ChEBI" id="CHEBI:18420"/>
        <label>2</label>
    </ligand>
</feature>
<keyword id="KW-0067">ATP-binding</keyword>
<keyword id="KW-0133">Cell shape</keyword>
<keyword id="KW-0961">Cell wall biogenesis/degradation</keyword>
<keyword id="KW-0963">Cytoplasm</keyword>
<keyword id="KW-0436">Ligase</keyword>
<keyword id="KW-0460">Magnesium</keyword>
<keyword id="KW-0464">Manganese</keyword>
<keyword id="KW-0479">Metal-binding</keyword>
<keyword id="KW-0547">Nucleotide-binding</keyword>
<keyword id="KW-0573">Peptidoglycan synthesis</keyword>
<keyword id="KW-1185">Reference proteome</keyword>
<name>DDLA_ECOL6</name>
<gene>
    <name evidence="2" type="primary">ddlA</name>
    <name type="ordered locus">c0487</name>
</gene>
<sequence length="364" mass="39346">MEKLRVGIVFGGKSAEHEVSLQSAKNIVDAIDKSRFDVVLLGIDKQGQWHVSDASNYLLNADDPAHIALRPSATSLAQVPGKHEHQLIDAQNGQPLPTVDVIFPIVHGTLGEDGSLQGMLRVANLPFVGSDVLASAACMDKDVTKRLLRDAGLNIAPFITLTRANRHNISFAEVESKLGLPLFVKPANQGSSVGVSKVTSEEQYTIAVDLAFEFDHKVIVEQGIKGREIECAVLGNDNPQASTCGEIVLTSDFYAYDTKYIDEDGAKVVVPAAIAPEINDKIRAIAVQAYQTLGCAGMARVDVFLTPENEVVINEINTLPGFTNISMYPKLWQASGLGYTDLITRLIELALERHAADNALKTTM</sequence>
<protein>
    <recommendedName>
        <fullName evidence="2">D-alanine--D-alanine ligase A</fullName>
        <ecNumber evidence="2">6.3.2.4</ecNumber>
    </recommendedName>
    <alternativeName>
        <fullName evidence="2">D-Ala-D-Ala ligase A</fullName>
    </alternativeName>
    <alternativeName>
        <fullName evidence="2">D-alanylalanine synthetase A</fullName>
    </alternativeName>
</protein>
<accession>Q8FKE3</accession>
<proteinExistence type="inferred from homology"/>
<organism>
    <name type="scientific">Escherichia coli O6:H1 (strain CFT073 / ATCC 700928 / UPEC)</name>
    <dbReference type="NCBI Taxonomy" id="199310"/>
    <lineage>
        <taxon>Bacteria</taxon>
        <taxon>Pseudomonadati</taxon>
        <taxon>Pseudomonadota</taxon>
        <taxon>Gammaproteobacteria</taxon>
        <taxon>Enterobacterales</taxon>
        <taxon>Enterobacteriaceae</taxon>
        <taxon>Escherichia</taxon>
    </lineage>
</organism>
<evidence type="ECO:0000250" key="1"/>
<evidence type="ECO:0000255" key="2">
    <source>
        <dbReference type="HAMAP-Rule" id="MF_00047"/>
    </source>
</evidence>
<comment type="function">
    <text evidence="2">Cell wall formation.</text>
</comment>
<comment type="catalytic activity">
    <reaction evidence="2">
        <text>2 D-alanine + ATP = D-alanyl-D-alanine + ADP + phosphate + H(+)</text>
        <dbReference type="Rhea" id="RHEA:11224"/>
        <dbReference type="ChEBI" id="CHEBI:15378"/>
        <dbReference type="ChEBI" id="CHEBI:30616"/>
        <dbReference type="ChEBI" id="CHEBI:43474"/>
        <dbReference type="ChEBI" id="CHEBI:57416"/>
        <dbReference type="ChEBI" id="CHEBI:57822"/>
        <dbReference type="ChEBI" id="CHEBI:456216"/>
        <dbReference type="EC" id="6.3.2.4"/>
    </reaction>
</comment>
<comment type="cofactor">
    <cofactor evidence="1">
        <name>Mg(2+)</name>
        <dbReference type="ChEBI" id="CHEBI:18420"/>
    </cofactor>
    <cofactor evidence="1">
        <name>Mn(2+)</name>
        <dbReference type="ChEBI" id="CHEBI:29035"/>
    </cofactor>
    <text evidence="1">Binds 2 magnesium or manganese ions per subunit.</text>
</comment>
<comment type="pathway">
    <text evidence="2">Cell wall biogenesis; peptidoglycan biosynthesis.</text>
</comment>
<comment type="subcellular location">
    <subcellularLocation>
        <location evidence="2">Cytoplasm</location>
    </subcellularLocation>
</comment>
<comment type="similarity">
    <text evidence="2">Belongs to the D-alanine--D-alanine ligase family.</text>
</comment>